<keyword id="KW-1003">Cell membrane</keyword>
<keyword id="KW-0472">Membrane</keyword>
<keyword id="KW-1185">Reference proteome</keyword>
<keyword id="KW-0728">SH3 domain</keyword>
<keyword id="KW-0346">Stress response</keyword>
<keyword id="KW-0812">Transmembrane</keyword>
<keyword id="KW-1133">Transmembrane helix</keyword>
<gene>
    <name type="primary">SHO1</name>
    <name type="ORF">Lema_P012260</name>
</gene>
<feature type="chain" id="PRO_0000410380" description="High osmolarity signaling protein SHO1">
    <location>
        <begin position="1"/>
        <end position="336"/>
    </location>
</feature>
<feature type="topological domain" description="Cytoplasmic" evidence="2">
    <location>
        <begin position="1"/>
        <end position="37"/>
    </location>
</feature>
<feature type="transmembrane region" description="Helical" evidence="2">
    <location>
        <begin position="38"/>
        <end position="58"/>
    </location>
</feature>
<feature type="topological domain" description="Extracellular" evidence="2">
    <location>
        <begin position="59"/>
        <end position="67"/>
    </location>
</feature>
<feature type="transmembrane region" description="Helical" evidence="2">
    <location>
        <begin position="68"/>
        <end position="88"/>
    </location>
</feature>
<feature type="topological domain" description="Cytoplasmic" evidence="2">
    <location>
        <begin position="89"/>
        <end position="96"/>
    </location>
</feature>
<feature type="transmembrane region" description="Helical" evidence="2">
    <location>
        <begin position="97"/>
        <end position="117"/>
    </location>
</feature>
<feature type="topological domain" description="Extracellular" evidence="2">
    <location>
        <begin position="118"/>
        <end position="119"/>
    </location>
</feature>
<feature type="transmembrane region" description="Helical" evidence="2">
    <location>
        <begin position="120"/>
        <end position="140"/>
    </location>
</feature>
<feature type="topological domain" description="Cytoplasmic" evidence="2">
    <location>
        <begin position="141"/>
        <end position="336"/>
    </location>
</feature>
<feature type="domain" description="SH3" evidence="3">
    <location>
        <begin position="277"/>
        <end position="336"/>
    </location>
</feature>
<feature type="region of interest" description="Disordered" evidence="4">
    <location>
        <begin position="186"/>
        <end position="210"/>
    </location>
</feature>
<feature type="region of interest" description="Disordered" evidence="4">
    <location>
        <begin position="226"/>
        <end position="273"/>
    </location>
</feature>
<feature type="compositionally biased region" description="Polar residues" evidence="4">
    <location>
        <begin position="190"/>
        <end position="210"/>
    </location>
</feature>
<reference key="1">
    <citation type="journal article" date="2011" name="Nat. Commun.">
        <title>Effector diversification within compartments of the Leptosphaeria maculans genome affected by Repeat-Induced Point mutations.</title>
        <authorList>
            <person name="Rouxel T."/>
            <person name="Grandaubert J."/>
            <person name="Hane J.K."/>
            <person name="Hoede C."/>
            <person name="van de Wouw A.P."/>
            <person name="Couloux A."/>
            <person name="Dominguez V."/>
            <person name="Anthouard V."/>
            <person name="Bally P."/>
            <person name="Bourras S."/>
            <person name="Cozijnsen A.J."/>
            <person name="Ciuffetti L.M."/>
            <person name="Degrave A."/>
            <person name="Dilmaghani A."/>
            <person name="Duret L."/>
            <person name="Fudal I."/>
            <person name="Goodwin S.B."/>
            <person name="Gout L."/>
            <person name="Glaser N."/>
            <person name="Linglin J."/>
            <person name="Kema G.H.J."/>
            <person name="Lapalu N."/>
            <person name="Lawrence C.B."/>
            <person name="May K."/>
            <person name="Meyer M."/>
            <person name="Ollivier B."/>
            <person name="Poulain J."/>
            <person name="Schoch C.L."/>
            <person name="Simon A."/>
            <person name="Spatafora J.W."/>
            <person name="Stachowiak A."/>
            <person name="Turgeon B.G."/>
            <person name="Tyler B.M."/>
            <person name="Vincent D."/>
            <person name="Weissenbach J."/>
            <person name="Amselem J."/>
            <person name="Quesneville H."/>
            <person name="Oliver R.P."/>
            <person name="Wincker P."/>
            <person name="Balesdent M.-H."/>
            <person name="Howlett B.J."/>
        </authorList>
    </citation>
    <scope>NUCLEOTIDE SEQUENCE [LARGE SCALE GENOMIC DNA]</scope>
    <source>
        <strain>JN3 / isolate v23.1.3 / race Av1-4-5-6-7-8</strain>
    </source>
</reference>
<name>SHO1_LEPMJ</name>
<evidence type="ECO:0000250" key="1"/>
<evidence type="ECO:0000255" key="2"/>
<evidence type="ECO:0000255" key="3">
    <source>
        <dbReference type="PROSITE-ProRule" id="PRU00192"/>
    </source>
</evidence>
<evidence type="ECO:0000256" key="4">
    <source>
        <dbReference type="SAM" id="MobiDB-lite"/>
    </source>
</evidence>
<evidence type="ECO:0000305" key="5"/>
<comment type="function">
    <text evidence="1">Plasma membrane osmosensor that activates the high osmolarity glycerol (HOG) MAPK signaling pathway in response to high osmolarity.</text>
</comment>
<comment type="subunit">
    <text evidence="1">Forms homooligomers.</text>
</comment>
<comment type="subcellular location">
    <subcellularLocation>
        <location evidence="1">Cell membrane</location>
        <topology evidence="1">Multi-pass membrane protein</topology>
    </subcellularLocation>
</comment>
<comment type="similarity">
    <text evidence="5">Belongs to the SHO1 family.</text>
</comment>
<proteinExistence type="inferred from homology"/>
<dbReference type="EMBL" id="FP929139">
    <property type="protein sequence ID" value="CBY02439.1"/>
    <property type="molecule type" value="Genomic_DNA"/>
</dbReference>
<dbReference type="RefSeq" id="XP_003845918.1">
    <property type="nucleotide sequence ID" value="XM_003845870.1"/>
</dbReference>
<dbReference type="SMR" id="E5AD87"/>
<dbReference type="FunCoup" id="E5AD87">
    <property type="interactions" value="111"/>
</dbReference>
<dbReference type="STRING" id="985895.E5AD87"/>
<dbReference type="EnsemblFungi" id="CBY02439">
    <property type="protein sequence ID" value="CBY02439"/>
    <property type="gene ID" value="LEMA_P012260.1"/>
</dbReference>
<dbReference type="VEuPathDB" id="FungiDB:LEMA_P012260.1"/>
<dbReference type="eggNOG" id="ENOG502QW7A">
    <property type="taxonomic scope" value="Eukaryota"/>
</dbReference>
<dbReference type="HOGENOM" id="CLU_043316_0_0_1"/>
<dbReference type="InParanoid" id="E5AD87"/>
<dbReference type="OMA" id="NIVWIFY"/>
<dbReference type="OrthoDB" id="5983572at2759"/>
<dbReference type="Proteomes" id="UP000002668">
    <property type="component" value="Genome"/>
</dbReference>
<dbReference type="GO" id="GO:0005886">
    <property type="term" value="C:plasma membrane"/>
    <property type="evidence" value="ECO:0007669"/>
    <property type="project" value="UniProtKB-SubCell"/>
</dbReference>
<dbReference type="CDD" id="cd11855">
    <property type="entry name" value="SH3_Sho1p"/>
    <property type="match status" value="1"/>
</dbReference>
<dbReference type="FunFam" id="2.30.30.40:FF:000213">
    <property type="entry name" value="High osmolarity signaling protein SHO1"/>
    <property type="match status" value="1"/>
</dbReference>
<dbReference type="Gene3D" id="2.30.30.40">
    <property type="entry name" value="SH3 Domains"/>
    <property type="match status" value="1"/>
</dbReference>
<dbReference type="InterPro" id="IPR036028">
    <property type="entry name" value="SH3-like_dom_sf"/>
</dbReference>
<dbReference type="InterPro" id="IPR001452">
    <property type="entry name" value="SH3_domain"/>
</dbReference>
<dbReference type="InterPro" id="IPR035522">
    <property type="entry name" value="Sho1_SH3"/>
</dbReference>
<dbReference type="Pfam" id="PF00018">
    <property type="entry name" value="SH3_1"/>
    <property type="match status" value="1"/>
</dbReference>
<dbReference type="PRINTS" id="PR00452">
    <property type="entry name" value="SH3DOMAIN"/>
</dbReference>
<dbReference type="SMART" id="SM00326">
    <property type="entry name" value="SH3"/>
    <property type="match status" value="1"/>
</dbReference>
<dbReference type="SUPFAM" id="SSF50044">
    <property type="entry name" value="SH3-domain"/>
    <property type="match status" value="1"/>
</dbReference>
<dbReference type="PROSITE" id="PS50002">
    <property type="entry name" value="SH3"/>
    <property type="match status" value="1"/>
</dbReference>
<organism>
    <name type="scientific">Leptosphaeria maculans (strain JN3 / isolate v23.1.3 / race Av1-4-5-6-7-8)</name>
    <name type="common">Blackleg fungus</name>
    <name type="synonym">Phoma lingam</name>
    <dbReference type="NCBI Taxonomy" id="985895"/>
    <lineage>
        <taxon>Eukaryota</taxon>
        <taxon>Fungi</taxon>
        <taxon>Dikarya</taxon>
        <taxon>Ascomycota</taxon>
        <taxon>Pezizomycotina</taxon>
        <taxon>Dothideomycetes</taxon>
        <taxon>Pleosporomycetidae</taxon>
        <taxon>Pleosporales</taxon>
        <taxon>Pleosporineae</taxon>
        <taxon>Leptosphaeriaceae</taxon>
        <taxon>Plenodomus</taxon>
        <taxon>Plenodomus lingam/Leptosphaeria maculans species complex</taxon>
    </lineage>
</organism>
<accession>E5AD87</accession>
<protein>
    <recommendedName>
        <fullName>High osmolarity signaling protein SHO1</fullName>
    </recommendedName>
    <alternativeName>
        <fullName>Osmosensor SHO1</fullName>
    </alternativeName>
</protein>
<sequence>MPVYGSVSSPSLRKMENGYGHGQRASLSFGRIIGDPFALATISIGVLAWIIAFVSSIISAIHGGFPNFAWWTLVFMFFCIAGVTVTVASDAERTYHVAIVGFLAAGLVFTTSSVNSLVYSPIAPFEAAAAGYILLSMIAVRDCISSSLSQPATNAPRPQIVWIFYYGSQPQASHRAFVDSYALHKEHPGSRSSRPISHGYTNRPETQVASQAPQMYTSAQLNGFETSSPVSGYPGGPAGANGRNSSVPQFGGMPNNGIPNAATPTQDEAHQQEASIEYPYRAKAIYSYEANPDDANEISFQKHDVLEVSDVSGRWWQAKKPNGETGIAPSNYLILL</sequence>